<proteinExistence type="inferred from homology"/>
<organism>
    <name type="scientific">Pseudomonas syringae pv. tomato (strain ATCC BAA-871 / DC3000)</name>
    <dbReference type="NCBI Taxonomy" id="223283"/>
    <lineage>
        <taxon>Bacteria</taxon>
        <taxon>Pseudomonadati</taxon>
        <taxon>Pseudomonadota</taxon>
        <taxon>Gammaproteobacteria</taxon>
        <taxon>Pseudomonadales</taxon>
        <taxon>Pseudomonadaceae</taxon>
        <taxon>Pseudomonas</taxon>
    </lineage>
</organism>
<gene>
    <name evidence="1" type="primary">anmK</name>
    <name type="ordered locus">PSPTO_0606</name>
</gene>
<name>ANMK_PSESM</name>
<sequence length="364" mass="39549">MDFFYIGVMSGSSLDGIDIALLKQDDRSRLVATHYIPMPEDLHAELLGLCSSGADEFARAAIAEQKWCKLVAQGVQTLLKEQNKVVADIRAIGSHGQTIRHEPARGYSIQIGNPALLAELTEITVVSDFRRRDIAAGGQGAPLVPAFHEALFDDNKDHRAVLNIGGFSNLSLIESDRPVEGFDCGPGNVLLDAWIQSQRHESYDKDGAWAASGKVDPELLKKLLSDPFFLTKGPKSTGREVFNLGWVHHHLFQLPTLAPEDVQATLLELTALTITESLQTAQAVTKELLVCGGGAHNKALMKRLAELLPDTEVNSTEKFGVDPDWVEAMAFAWLAHCCLEGVPANRPTVTGAKGRRVLGAIYPA</sequence>
<accession>Q889Z1</accession>
<evidence type="ECO:0000255" key="1">
    <source>
        <dbReference type="HAMAP-Rule" id="MF_01270"/>
    </source>
</evidence>
<evidence type="ECO:0000305" key="2"/>
<reference key="1">
    <citation type="journal article" date="2003" name="Proc. Natl. Acad. Sci. U.S.A.">
        <title>The complete genome sequence of the Arabidopsis and tomato pathogen Pseudomonas syringae pv. tomato DC3000.</title>
        <authorList>
            <person name="Buell C.R."/>
            <person name="Joardar V."/>
            <person name="Lindeberg M."/>
            <person name="Selengut J."/>
            <person name="Paulsen I.T."/>
            <person name="Gwinn M.L."/>
            <person name="Dodson R.J."/>
            <person name="DeBoy R.T."/>
            <person name="Durkin A.S."/>
            <person name="Kolonay J.F."/>
            <person name="Madupu R."/>
            <person name="Daugherty S.C."/>
            <person name="Brinkac L.M."/>
            <person name="Beanan M.J."/>
            <person name="Haft D.H."/>
            <person name="Nelson W.C."/>
            <person name="Davidsen T.M."/>
            <person name="Zafar N."/>
            <person name="Zhou L."/>
            <person name="Liu J."/>
            <person name="Yuan Q."/>
            <person name="Khouri H.M."/>
            <person name="Fedorova N.B."/>
            <person name="Tran B."/>
            <person name="Russell D."/>
            <person name="Berry K.J."/>
            <person name="Utterback T.R."/>
            <person name="Van Aken S.E."/>
            <person name="Feldblyum T.V."/>
            <person name="D'Ascenzo M."/>
            <person name="Deng W.-L."/>
            <person name="Ramos A.R."/>
            <person name="Alfano J.R."/>
            <person name="Cartinhour S."/>
            <person name="Chatterjee A.K."/>
            <person name="Delaney T.P."/>
            <person name="Lazarowitz S.G."/>
            <person name="Martin G.B."/>
            <person name="Schneider D.J."/>
            <person name="Tang X."/>
            <person name="Bender C.L."/>
            <person name="White O."/>
            <person name="Fraser C.M."/>
            <person name="Collmer A."/>
        </authorList>
    </citation>
    <scope>NUCLEOTIDE SEQUENCE [LARGE SCALE GENOMIC DNA]</scope>
    <source>
        <strain>ATCC BAA-871 / DC3000</strain>
    </source>
</reference>
<dbReference type="EC" id="2.7.1.170" evidence="1"/>
<dbReference type="EMBL" id="AE016853">
    <property type="protein sequence ID" value="AAO54148.1"/>
    <property type="status" value="ALT_INIT"/>
    <property type="molecule type" value="Genomic_DNA"/>
</dbReference>
<dbReference type="RefSeq" id="NP_790453.1">
    <property type="nucleotide sequence ID" value="NC_004578.1"/>
</dbReference>
<dbReference type="RefSeq" id="WP_005614195.1">
    <property type="nucleotide sequence ID" value="NC_004578.1"/>
</dbReference>
<dbReference type="SMR" id="Q889Z1"/>
<dbReference type="STRING" id="223283.PSPTO_0606"/>
<dbReference type="GeneID" id="1182217"/>
<dbReference type="KEGG" id="pst:PSPTO_0606"/>
<dbReference type="PATRIC" id="fig|223283.9.peg.611"/>
<dbReference type="eggNOG" id="COG2377">
    <property type="taxonomic scope" value="Bacteria"/>
</dbReference>
<dbReference type="HOGENOM" id="CLU_038782_0_0_6"/>
<dbReference type="OrthoDB" id="9763949at2"/>
<dbReference type="UniPathway" id="UPA00343"/>
<dbReference type="UniPathway" id="UPA00544"/>
<dbReference type="PHI-base" id="PHI:9686"/>
<dbReference type="Proteomes" id="UP000002515">
    <property type="component" value="Chromosome"/>
</dbReference>
<dbReference type="GO" id="GO:0005524">
    <property type="term" value="F:ATP binding"/>
    <property type="evidence" value="ECO:0007669"/>
    <property type="project" value="UniProtKB-UniRule"/>
</dbReference>
<dbReference type="GO" id="GO:0016301">
    <property type="term" value="F:kinase activity"/>
    <property type="evidence" value="ECO:0007669"/>
    <property type="project" value="UniProtKB-KW"/>
</dbReference>
<dbReference type="GO" id="GO:0016773">
    <property type="term" value="F:phosphotransferase activity, alcohol group as acceptor"/>
    <property type="evidence" value="ECO:0007669"/>
    <property type="project" value="UniProtKB-UniRule"/>
</dbReference>
<dbReference type="GO" id="GO:0097175">
    <property type="term" value="P:1,6-anhydro-N-acetyl-beta-muramic acid catabolic process"/>
    <property type="evidence" value="ECO:0007669"/>
    <property type="project" value="UniProtKB-UniRule"/>
</dbReference>
<dbReference type="GO" id="GO:0006040">
    <property type="term" value="P:amino sugar metabolic process"/>
    <property type="evidence" value="ECO:0007669"/>
    <property type="project" value="InterPro"/>
</dbReference>
<dbReference type="GO" id="GO:0009254">
    <property type="term" value="P:peptidoglycan turnover"/>
    <property type="evidence" value="ECO:0007669"/>
    <property type="project" value="UniProtKB-UniRule"/>
</dbReference>
<dbReference type="CDD" id="cd24050">
    <property type="entry name" value="ASKHA_NBD_ANMK"/>
    <property type="match status" value="1"/>
</dbReference>
<dbReference type="Gene3D" id="3.30.420.40">
    <property type="match status" value="2"/>
</dbReference>
<dbReference type="HAMAP" id="MF_01270">
    <property type="entry name" value="AnhMurNAc_kinase"/>
    <property type="match status" value="1"/>
</dbReference>
<dbReference type="InterPro" id="IPR005338">
    <property type="entry name" value="Anhydro_N_Ac-Mur_kinase"/>
</dbReference>
<dbReference type="InterPro" id="IPR043129">
    <property type="entry name" value="ATPase_NBD"/>
</dbReference>
<dbReference type="NCBIfam" id="NF007139">
    <property type="entry name" value="PRK09585.1-3"/>
    <property type="match status" value="1"/>
</dbReference>
<dbReference type="PANTHER" id="PTHR30605">
    <property type="entry name" value="ANHYDRO-N-ACETYLMURAMIC ACID KINASE"/>
    <property type="match status" value="1"/>
</dbReference>
<dbReference type="PANTHER" id="PTHR30605:SF0">
    <property type="entry name" value="ANHYDRO-N-ACETYLMURAMIC ACID KINASE"/>
    <property type="match status" value="1"/>
</dbReference>
<dbReference type="Pfam" id="PF03702">
    <property type="entry name" value="AnmK"/>
    <property type="match status" value="1"/>
</dbReference>
<dbReference type="SUPFAM" id="SSF53067">
    <property type="entry name" value="Actin-like ATPase domain"/>
    <property type="match status" value="1"/>
</dbReference>
<feature type="chain" id="PRO_0000250034" description="Anhydro-N-acetylmuramic acid kinase">
    <location>
        <begin position="1"/>
        <end position="364"/>
    </location>
</feature>
<feature type="binding site" evidence="1">
    <location>
        <begin position="11"/>
        <end position="18"/>
    </location>
    <ligand>
        <name>ATP</name>
        <dbReference type="ChEBI" id="CHEBI:30616"/>
    </ligand>
</feature>
<comment type="function">
    <text evidence="1">Catalyzes the specific phosphorylation of 1,6-anhydro-N-acetylmuramic acid (anhMurNAc) with the simultaneous cleavage of the 1,6-anhydro ring, generating MurNAc-6-P. Is required for the utilization of anhMurNAc either imported from the medium or derived from its own cell wall murein, and thus plays a role in cell wall recycling.</text>
</comment>
<comment type="catalytic activity">
    <reaction evidence="1">
        <text>1,6-anhydro-N-acetyl-beta-muramate + ATP + H2O = N-acetyl-D-muramate 6-phosphate + ADP + H(+)</text>
        <dbReference type="Rhea" id="RHEA:24952"/>
        <dbReference type="ChEBI" id="CHEBI:15377"/>
        <dbReference type="ChEBI" id="CHEBI:15378"/>
        <dbReference type="ChEBI" id="CHEBI:30616"/>
        <dbReference type="ChEBI" id="CHEBI:58690"/>
        <dbReference type="ChEBI" id="CHEBI:58722"/>
        <dbReference type="ChEBI" id="CHEBI:456216"/>
        <dbReference type="EC" id="2.7.1.170"/>
    </reaction>
</comment>
<comment type="pathway">
    <text evidence="1">Amino-sugar metabolism; 1,6-anhydro-N-acetylmuramate degradation.</text>
</comment>
<comment type="pathway">
    <text evidence="1">Cell wall biogenesis; peptidoglycan recycling.</text>
</comment>
<comment type="similarity">
    <text evidence="1">Belongs to the anhydro-N-acetylmuramic acid kinase family.</text>
</comment>
<comment type="sequence caution" evidence="2">
    <conflict type="erroneous initiation">
        <sequence resource="EMBL-CDS" id="AAO54148"/>
    </conflict>
</comment>
<protein>
    <recommendedName>
        <fullName evidence="1">Anhydro-N-acetylmuramic acid kinase</fullName>
        <ecNumber evidence="1">2.7.1.170</ecNumber>
    </recommendedName>
    <alternativeName>
        <fullName evidence="1">AnhMurNAc kinase</fullName>
    </alternativeName>
</protein>
<keyword id="KW-0067">ATP-binding</keyword>
<keyword id="KW-0119">Carbohydrate metabolism</keyword>
<keyword id="KW-0418">Kinase</keyword>
<keyword id="KW-0547">Nucleotide-binding</keyword>
<keyword id="KW-1185">Reference proteome</keyword>
<keyword id="KW-0808">Transferase</keyword>